<reference key="1">
    <citation type="submission" date="2006-12" db="EMBL/GenBank/DDBJ databases">
        <title>Complete sequence of chromosome 1 of Acidovorax sp. JS42.</title>
        <authorList>
            <person name="Copeland A."/>
            <person name="Lucas S."/>
            <person name="Lapidus A."/>
            <person name="Barry K."/>
            <person name="Detter J.C."/>
            <person name="Glavina del Rio T."/>
            <person name="Dalin E."/>
            <person name="Tice H."/>
            <person name="Pitluck S."/>
            <person name="Chertkov O."/>
            <person name="Brettin T."/>
            <person name="Bruce D."/>
            <person name="Han C."/>
            <person name="Tapia R."/>
            <person name="Gilna P."/>
            <person name="Schmutz J."/>
            <person name="Larimer F."/>
            <person name="Land M."/>
            <person name="Hauser L."/>
            <person name="Kyrpides N."/>
            <person name="Kim E."/>
            <person name="Stahl D."/>
            <person name="Richardson P."/>
        </authorList>
    </citation>
    <scope>NUCLEOTIDE SEQUENCE [LARGE SCALE GENOMIC DNA]</scope>
    <source>
        <strain>JS42</strain>
    </source>
</reference>
<name>APAH_ACISJ</name>
<sequence>MALYCVGDIQGCDDAFERLLATIGFSPSRDALYVLGDLVNRGPDSAAVLRRCITLGDSVRPLLGNHDLHLLAAAYGTRRPSRRDTLQGILLAPDRDEMLEWLRHQPLARRVHHGGGDLLMVHAGVLPQWTAEETLAYAGEVEAVLQSREFAGFLQQMYGNSPDLWSPELQGTDRLRVIVNALTRMRFCSPEGRMDFESTESASEAPPGLVPWFDAPGRRTLNTLIAFGHWSTLGWLDRADVLGLDTGCVWGGCLSAVRFGTTLADRERYHVECPQAQMPGA</sequence>
<comment type="function">
    <text evidence="1">Hydrolyzes diadenosine 5',5'''-P1,P4-tetraphosphate to yield ADP.</text>
</comment>
<comment type="catalytic activity">
    <reaction evidence="1">
        <text>P(1),P(4)-bis(5'-adenosyl) tetraphosphate + H2O = 2 ADP + 2 H(+)</text>
        <dbReference type="Rhea" id="RHEA:24252"/>
        <dbReference type="ChEBI" id="CHEBI:15377"/>
        <dbReference type="ChEBI" id="CHEBI:15378"/>
        <dbReference type="ChEBI" id="CHEBI:58141"/>
        <dbReference type="ChEBI" id="CHEBI:456216"/>
        <dbReference type="EC" id="3.6.1.41"/>
    </reaction>
</comment>
<comment type="similarity">
    <text evidence="1">Belongs to the Ap4A hydrolase family.</text>
</comment>
<dbReference type="EC" id="3.6.1.41" evidence="1"/>
<dbReference type="EMBL" id="CP000539">
    <property type="protein sequence ID" value="ABM41376.1"/>
    <property type="molecule type" value="Genomic_DNA"/>
</dbReference>
<dbReference type="SMR" id="A1W551"/>
<dbReference type="STRING" id="232721.Ajs_1143"/>
<dbReference type="KEGG" id="ajs:Ajs_1143"/>
<dbReference type="eggNOG" id="COG0639">
    <property type="taxonomic scope" value="Bacteria"/>
</dbReference>
<dbReference type="HOGENOM" id="CLU_056184_1_0_4"/>
<dbReference type="Proteomes" id="UP000000645">
    <property type="component" value="Chromosome"/>
</dbReference>
<dbReference type="GO" id="GO:0008803">
    <property type="term" value="F:bis(5'-nucleosyl)-tetraphosphatase (symmetrical) activity"/>
    <property type="evidence" value="ECO:0007669"/>
    <property type="project" value="UniProtKB-UniRule"/>
</dbReference>
<dbReference type="CDD" id="cd07422">
    <property type="entry name" value="MPP_ApaH"/>
    <property type="match status" value="1"/>
</dbReference>
<dbReference type="Gene3D" id="3.60.21.10">
    <property type="match status" value="1"/>
</dbReference>
<dbReference type="HAMAP" id="MF_00199">
    <property type="entry name" value="ApaH"/>
    <property type="match status" value="1"/>
</dbReference>
<dbReference type="InterPro" id="IPR004617">
    <property type="entry name" value="ApaH"/>
</dbReference>
<dbReference type="InterPro" id="IPR004843">
    <property type="entry name" value="Calcineurin-like_PHP_ApaH"/>
</dbReference>
<dbReference type="InterPro" id="IPR029052">
    <property type="entry name" value="Metallo-depent_PP-like"/>
</dbReference>
<dbReference type="NCBIfam" id="TIGR00668">
    <property type="entry name" value="apaH"/>
    <property type="match status" value="1"/>
</dbReference>
<dbReference type="NCBIfam" id="NF001204">
    <property type="entry name" value="PRK00166.1"/>
    <property type="match status" value="1"/>
</dbReference>
<dbReference type="PANTHER" id="PTHR40942">
    <property type="match status" value="1"/>
</dbReference>
<dbReference type="PANTHER" id="PTHR40942:SF4">
    <property type="entry name" value="CYTOCHROME C5"/>
    <property type="match status" value="1"/>
</dbReference>
<dbReference type="Pfam" id="PF00149">
    <property type="entry name" value="Metallophos"/>
    <property type="match status" value="1"/>
</dbReference>
<dbReference type="PIRSF" id="PIRSF000903">
    <property type="entry name" value="B5n-ttraPtase_sm"/>
    <property type="match status" value="1"/>
</dbReference>
<dbReference type="SUPFAM" id="SSF56300">
    <property type="entry name" value="Metallo-dependent phosphatases"/>
    <property type="match status" value="1"/>
</dbReference>
<proteinExistence type="inferred from homology"/>
<feature type="chain" id="PRO_1000012039" description="Bis(5'-nucleosyl)-tetraphosphatase, symmetrical">
    <location>
        <begin position="1"/>
        <end position="281"/>
    </location>
</feature>
<gene>
    <name evidence="1" type="primary">apaH</name>
    <name type="ordered locus">Ajs_1143</name>
</gene>
<accession>A1W551</accession>
<protein>
    <recommendedName>
        <fullName evidence="1">Bis(5'-nucleosyl)-tetraphosphatase, symmetrical</fullName>
        <ecNumber evidence="1">3.6.1.41</ecNumber>
    </recommendedName>
    <alternativeName>
        <fullName evidence="1">Ap4A hydrolase</fullName>
    </alternativeName>
    <alternativeName>
        <fullName evidence="1">Diadenosine 5',5'''-P1,P4-tetraphosphate pyrophosphohydrolase</fullName>
    </alternativeName>
    <alternativeName>
        <fullName evidence="1">Diadenosine tetraphosphatase</fullName>
    </alternativeName>
</protein>
<evidence type="ECO:0000255" key="1">
    <source>
        <dbReference type="HAMAP-Rule" id="MF_00199"/>
    </source>
</evidence>
<keyword id="KW-0378">Hydrolase</keyword>
<organism>
    <name type="scientific">Acidovorax sp. (strain JS42)</name>
    <dbReference type="NCBI Taxonomy" id="232721"/>
    <lineage>
        <taxon>Bacteria</taxon>
        <taxon>Pseudomonadati</taxon>
        <taxon>Pseudomonadota</taxon>
        <taxon>Betaproteobacteria</taxon>
        <taxon>Burkholderiales</taxon>
        <taxon>Comamonadaceae</taxon>
        <taxon>Acidovorax</taxon>
    </lineage>
</organism>